<dbReference type="EMBL" id="CP000745">
    <property type="protein sequence ID" value="ABR65269.1"/>
    <property type="molecule type" value="Genomic_DNA"/>
</dbReference>
<dbReference type="SMR" id="A6VFP3"/>
<dbReference type="STRING" id="426368.MmarC7_0199"/>
<dbReference type="KEGG" id="mmz:MmarC7_0199"/>
<dbReference type="eggNOG" id="arCOG04277">
    <property type="taxonomic scope" value="Archaea"/>
</dbReference>
<dbReference type="HOGENOM" id="CLU_102600_3_0_2"/>
<dbReference type="OrthoDB" id="23689at2157"/>
<dbReference type="GO" id="GO:0005737">
    <property type="term" value="C:cytoplasm"/>
    <property type="evidence" value="ECO:0007669"/>
    <property type="project" value="UniProtKB-SubCell"/>
</dbReference>
<dbReference type="GO" id="GO:0043022">
    <property type="term" value="F:ribosome binding"/>
    <property type="evidence" value="ECO:0007669"/>
    <property type="project" value="InterPro"/>
</dbReference>
<dbReference type="GO" id="GO:0003723">
    <property type="term" value="F:RNA binding"/>
    <property type="evidence" value="ECO:0007669"/>
    <property type="project" value="InterPro"/>
</dbReference>
<dbReference type="GO" id="GO:0003746">
    <property type="term" value="F:translation elongation factor activity"/>
    <property type="evidence" value="ECO:0007669"/>
    <property type="project" value="InterPro"/>
</dbReference>
<dbReference type="GO" id="GO:0003743">
    <property type="term" value="F:translation initiation factor activity"/>
    <property type="evidence" value="ECO:0007669"/>
    <property type="project" value="UniProtKB-UniRule"/>
</dbReference>
<dbReference type="GO" id="GO:0045901">
    <property type="term" value="P:positive regulation of translational elongation"/>
    <property type="evidence" value="ECO:0007669"/>
    <property type="project" value="InterPro"/>
</dbReference>
<dbReference type="GO" id="GO:0045905">
    <property type="term" value="P:positive regulation of translational termination"/>
    <property type="evidence" value="ECO:0007669"/>
    <property type="project" value="InterPro"/>
</dbReference>
<dbReference type="CDD" id="cd04467">
    <property type="entry name" value="S1_aIF5A"/>
    <property type="match status" value="1"/>
</dbReference>
<dbReference type="Gene3D" id="2.30.30.30">
    <property type="match status" value="1"/>
</dbReference>
<dbReference type="Gene3D" id="2.40.50.140">
    <property type="entry name" value="Nucleic acid-binding proteins"/>
    <property type="match status" value="1"/>
</dbReference>
<dbReference type="HAMAP" id="MF_00085">
    <property type="entry name" value="eIF_5A"/>
    <property type="match status" value="1"/>
</dbReference>
<dbReference type="InterPro" id="IPR001884">
    <property type="entry name" value="IF5A-like"/>
</dbReference>
<dbReference type="InterPro" id="IPR048670">
    <property type="entry name" value="IF5A-like_N"/>
</dbReference>
<dbReference type="InterPro" id="IPR012340">
    <property type="entry name" value="NA-bd_OB-fold"/>
</dbReference>
<dbReference type="InterPro" id="IPR014722">
    <property type="entry name" value="Rib_uL2_dom2"/>
</dbReference>
<dbReference type="InterPro" id="IPR019769">
    <property type="entry name" value="Trans_elong_IF5A_hypusine_site"/>
</dbReference>
<dbReference type="InterPro" id="IPR022847">
    <property type="entry name" value="Transl_elong_IF5A_arc"/>
</dbReference>
<dbReference type="InterPro" id="IPR020189">
    <property type="entry name" value="Transl_elong_IF5A_C"/>
</dbReference>
<dbReference type="InterPro" id="IPR008991">
    <property type="entry name" value="Translation_prot_SH3-like_sf"/>
</dbReference>
<dbReference type="NCBIfam" id="TIGR00037">
    <property type="entry name" value="eIF_5A"/>
    <property type="match status" value="1"/>
</dbReference>
<dbReference type="NCBIfam" id="NF003076">
    <property type="entry name" value="PRK03999.1"/>
    <property type="match status" value="1"/>
</dbReference>
<dbReference type="PANTHER" id="PTHR11673">
    <property type="entry name" value="TRANSLATION INITIATION FACTOR 5A FAMILY MEMBER"/>
    <property type="match status" value="1"/>
</dbReference>
<dbReference type="Pfam" id="PF21485">
    <property type="entry name" value="IF5A-like_N"/>
    <property type="match status" value="1"/>
</dbReference>
<dbReference type="PIRSF" id="PIRSF003025">
    <property type="entry name" value="eIF5A"/>
    <property type="match status" value="1"/>
</dbReference>
<dbReference type="SMART" id="SM01376">
    <property type="entry name" value="eIF-5a"/>
    <property type="match status" value="1"/>
</dbReference>
<dbReference type="SUPFAM" id="SSF50249">
    <property type="entry name" value="Nucleic acid-binding proteins"/>
    <property type="match status" value="1"/>
</dbReference>
<dbReference type="SUPFAM" id="SSF50104">
    <property type="entry name" value="Translation proteins SH3-like domain"/>
    <property type="match status" value="1"/>
</dbReference>
<dbReference type="PROSITE" id="PS00302">
    <property type="entry name" value="IF5A_HYPUSINE"/>
    <property type="match status" value="1"/>
</dbReference>
<gene>
    <name type="primary">eIF5A</name>
    <name type="ordered locus">MmarC7_0199</name>
</gene>
<reference key="1">
    <citation type="submission" date="2007-06" db="EMBL/GenBank/DDBJ databases">
        <title>Complete sequence of Methanococcus maripaludis C7.</title>
        <authorList>
            <consortium name="US DOE Joint Genome Institute"/>
            <person name="Copeland A."/>
            <person name="Lucas S."/>
            <person name="Lapidus A."/>
            <person name="Barry K."/>
            <person name="Glavina del Rio T."/>
            <person name="Dalin E."/>
            <person name="Tice H."/>
            <person name="Pitluck S."/>
            <person name="Clum A."/>
            <person name="Schmutz J."/>
            <person name="Larimer F."/>
            <person name="Land M."/>
            <person name="Hauser L."/>
            <person name="Kyrpides N."/>
            <person name="Anderson I."/>
            <person name="Sieprawska-Lupa M."/>
            <person name="Whitman W.B."/>
            <person name="Richardson P."/>
        </authorList>
    </citation>
    <scope>NUCLEOTIDE SEQUENCE [LARGE SCALE GENOMIC DNA]</scope>
    <source>
        <strain>C7 / ATCC BAA-1331</strain>
    </source>
</reference>
<protein>
    <recommendedName>
        <fullName evidence="1">Translation initiation factor 5A</fullName>
    </recommendedName>
    <alternativeName>
        <fullName evidence="1">Hypusine-containing protein</fullName>
    </alternativeName>
    <alternativeName>
        <fullName evidence="1">eIF-5A</fullName>
    </alternativeName>
</protein>
<accession>A6VFP3</accession>
<evidence type="ECO:0000255" key="1">
    <source>
        <dbReference type="HAMAP-Rule" id="MF_00085"/>
    </source>
</evidence>
<keyword id="KW-0963">Cytoplasm</keyword>
<keyword id="KW-0385">Hypusine</keyword>
<keyword id="KW-0396">Initiation factor</keyword>
<keyword id="KW-0648">Protein biosynthesis</keyword>
<feature type="chain" id="PRO_1000007911" description="Translation initiation factor 5A">
    <location>
        <begin position="1"/>
        <end position="131"/>
    </location>
</feature>
<feature type="modified residue" description="Hypusine" evidence="1">
    <location>
        <position position="37"/>
    </location>
</feature>
<proteinExistence type="inferred from homology"/>
<name>IF5A_METM7</name>
<comment type="function">
    <text evidence="1">Functions by promoting the formation of the first peptide bond.</text>
</comment>
<comment type="subcellular location">
    <subcellularLocation>
        <location evidence="1">Cytoplasm</location>
    </subcellularLocation>
</comment>
<comment type="similarity">
    <text evidence="1">Belongs to the eIF-5A family.</text>
</comment>
<sequence>MAGTKPGDLGGVKVGQYVVIEGVACKVMDTAHSKPGKHGGAKVRLVAVGIFEPVKKEHVGPASSRIDIPLIDKRKGQVLALMGDNVQIMDMETYETLEIPMPDDVEGIESGVEVEYFEAMDRYKITRVISK</sequence>
<organism>
    <name type="scientific">Methanococcus maripaludis (strain C7 / ATCC BAA-1331)</name>
    <dbReference type="NCBI Taxonomy" id="426368"/>
    <lineage>
        <taxon>Archaea</taxon>
        <taxon>Methanobacteriati</taxon>
        <taxon>Methanobacteriota</taxon>
        <taxon>Methanomada group</taxon>
        <taxon>Methanococci</taxon>
        <taxon>Methanococcales</taxon>
        <taxon>Methanococcaceae</taxon>
        <taxon>Methanococcus</taxon>
    </lineage>
</organism>